<protein>
    <recommendedName>
        <fullName evidence="10">E3 ubiquitin-protein ligase RNF115</fullName>
        <ecNumber evidence="5 6">2.3.2.27</ecNumber>
    </recommendedName>
    <alternativeName>
        <fullName evidence="11">RING finger protein 115</fullName>
    </alternativeName>
    <alternativeName>
        <fullName evidence="10">RING-type E3 ubiquitin transferase RNF115</fullName>
    </alternativeName>
    <alternativeName>
        <fullName evidence="9">Rab7-interacting RING finger protein</fullName>
        <shortName evidence="9">Rabring 7</shortName>
    </alternativeName>
    <alternativeName>
        <fullName evidence="1">Zinc finger protein 364</fullName>
    </alternativeName>
</protein>
<name>RN115_MOUSE</name>
<reference key="1">
    <citation type="journal article" date="2005" name="Science">
        <title>The transcriptional landscape of the mammalian genome.</title>
        <authorList>
            <person name="Carninci P."/>
            <person name="Kasukawa T."/>
            <person name="Katayama S."/>
            <person name="Gough J."/>
            <person name="Frith M.C."/>
            <person name="Maeda N."/>
            <person name="Oyama R."/>
            <person name="Ravasi T."/>
            <person name="Lenhard B."/>
            <person name="Wells C."/>
            <person name="Kodzius R."/>
            <person name="Shimokawa K."/>
            <person name="Bajic V.B."/>
            <person name="Brenner S.E."/>
            <person name="Batalov S."/>
            <person name="Forrest A.R."/>
            <person name="Zavolan M."/>
            <person name="Davis M.J."/>
            <person name="Wilming L.G."/>
            <person name="Aidinis V."/>
            <person name="Allen J.E."/>
            <person name="Ambesi-Impiombato A."/>
            <person name="Apweiler R."/>
            <person name="Aturaliya R.N."/>
            <person name="Bailey T.L."/>
            <person name="Bansal M."/>
            <person name="Baxter L."/>
            <person name="Beisel K.W."/>
            <person name="Bersano T."/>
            <person name="Bono H."/>
            <person name="Chalk A.M."/>
            <person name="Chiu K.P."/>
            <person name="Choudhary V."/>
            <person name="Christoffels A."/>
            <person name="Clutterbuck D.R."/>
            <person name="Crowe M.L."/>
            <person name="Dalla E."/>
            <person name="Dalrymple B.P."/>
            <person name="de Bono B."/>
            <person name="Della Gatta G."/>
            <person name="di Bernardo D."/>
            <person name="Down T."/>
            <person name="Engstrom P."/>
            <person name="Fagiolini M."/>
            <person name="Faulkner G."/>
            <person name="Fletcher C.F."/>
            <person name="Fukushima T."/>
            <person name="Furuno M."/>
            <person name="Futaki S."/>
            <person name="Gariboldi M."/>
            <person name="Georgii-Hemming P."/>
            <person name="Gingeras T.R."/>
            <person name="Gojobori T."/>
            <person name="Green R.E."/>
            <person name="Gustincich S."/>
            <person name="Harbers M."/>
            <person name="Hayashi Y."/>
            <person name="Hensch T.K."/>
            <person name="Hirokawa N."/>
            <person name="Hill D."/>
            <person name="Huminiecki L."/>
            <person name="Iacono M."/>
            <person name="Ikeo K."/>
            <person name="Iwama A."/>
            <person name="Ishikawa T."/>
            <person name="Jakt M."/>
            <person name="Kanapin A."/>
            <person name="Katoh M."/>
            <person name="Kawasawa Y."/>
            <person name="Kelso J."/>
            <person name="Kitamura H."/>
            <person name="Kitano H."/>
            <person name="Kollias G."/>
            <person name="Krishnan S.P."/>
            <person name="Kruger A."/>
            <person name="Kummerfeld S.K."/>
            <person name="Kurochkin I.V."/>
            <person name="Lareau L.F."/>
            <person name="Lazarevic D."/>
            <person name="Lipovich L."/>
            <person name="Liu J."/>
            <person name="Liuni S."/>
            <person name="McWilliam S."/>
            <person name="Madan Babu M."/>
            <person name="Madera M."/>
            <person name="Marchionni L."/>
            <person name="Matsuda H."/>
            <person name="Matsuzawa S."/>
            <person name="Miki H."/>
            <person name="Mignone F."/>
            <person name="Miyake S."/>
            <person name="Morris K."/>
            <person name="Mottagui-Tabar S."/>
            <person name="Mulder N."/>
            <person name="Nakano N."/>
            <person name="Nakauchi H."/>
            <person name="Ng P."/>
            <person name="Nilsson R."/>
            <person name="Nishiguchi S."/>
            <person name="Nishikawa S."/>
            <person name="Nori F."/>
            <person name="Ohara O."/>
            <person name="Okazaki Y."/>
            <person name="Orlando V."/>
            <person name="Pang K.C."/>
            <person name="Pavan W.J."/>
            <person name="Pavesi G."/>
            <person name="Pesole G."/>
            <person name="Petrovsky N."/>
            <person name="Piazza S."/>
            <person name="Reed J."/>
            <person name="Reid J.F."/>
            <person name="Ring B.Z."/>
            <person name="Ringwald M."/>
            <person name="Rost B."/>
            <person name="Ruan Y."/>
            <person name="Salzberg S.L."/>
            <person name="Sandelin A."/>
            <person name="Schneider C."/>
            <person name="Schoenbach C."/>
            <person name="Sekiguchi K."/>
            <person name="Semple C.A."/>
            <person name="Seno S."/>
            <person name="Sessa L."/>
            <person name="Sheng Y."/>
            <person name="Shibata Y."/>
            <person name="Shimada H."/>
            <person name="Shimada K."/>
            <person name="Silva D."/>
            <person name="Sinclair B."/>
            <person name="Sperling S."/>
            <person name="Stupka E."/>
            <person name="Sugiura K."/>
            <person name="Sultana R."/>
            <person name="Takenaka Y."/>
            <person name="Taki K."/>
            <person name="Tammoja K."/>
            <person name="Tan S.L."/>
            <person name="Tang S."/>
            <person name="Taylor M.S."/>
            <person name="Tegner J."/>
            <person name="Teichmann S.A."/>
            <person name="Ueda H.R."/>
            <person name="van Nimwegen E."/>
            <person name="Verardo R."/>
            <person name="Wei C.L."/>
            <person name="Yagi K."/>
            <person name="Yamanishi H."/>
            <person name="Zabarovsky E."/>
            <person name="Zhu S."/>
            <person name="Zimmer A."/>
            <person name="Hide W."/>
            <person name="Bult C."/>
            <person name="Grimmond S.M."/>
            <person name="Teasdale R.D."/>
            <person name="Liu E.T."/>
            <person name="Brusic V."/>
            <person name="Quackenbush J."/>
            <person name="Wahlestedt C."/>
            <person name="Mattick J.S."/>
            <person name="Hume D.A."/>
            <person name="Kai C."/>
            <person name="Sasaki D."/>
            <person name="Tomaru Y."/>
            <person name="Fukuda S."/>
            <person name="Kanamori-Katayama M."/>
            <person name="Suzuki M."/>
            <person name="Aoki J."/>
            <person name="Arakawa T."/>
            <person name="Iida J."/>
            <person name="Imamura K."/>
            <person name="Itoh M."/>
            <person name="Kato T."/>
            <person name="Kawaji H."/>
            <person name="Kawagashira N."/>
            <person name="Kawashima T."/>
            <person name="Kojima M."/>
            <person name="Kondo S."/>
            <person name="Konno H."/>
            <person name="Nakano K."/>
            <person name="Ninomiya N."/>
            <person name="Nishio T."/>
            <person name="Okada M."/>
            <person name="Plessy C."/>
            <person name="Shibata K."/>
            <person name="Shiraki T."/>
            <person name="Suzuki S."/>
            <person name="Tagami M."/>
            <person name="Waki K."/>
            <person name="Watahiki A."/>
            <person name="Okamura-Oho Y."/>
            <person name="Suzuki H."/>
            <person name="Kawai J."/>
            <person name="Hayashizaki Y."/>
        </authorList>
    </citation>
    <scope>NUCLEOTIDE SEQUENCE [LARGE SCALE MRNA]</scope>
    <source>
        <strain>C57BL/6J</strain>
        <tissue>Embryo</tissue>
        <tissue>Small intestine</tissue>
    </source>
</reference>
<reference key="2">
    <citation type="journal article" date="2004" name="Genome Res.">
        <title>The status, quality, and expansion of the NIH full-length cDNA project: the Mammalian Gene Collection (MGC).</title>
        <authorList>
            <consortium name="The MGC Project Team"/>
        </authorList>
    </citation>
    <scope>NUCLEOTIDE SEQUENCE [LARGE SCALE MRNA]</scope>
    <source>
        <strain>Czech II</strain>
        <tissue>Mammary tumor</tissue>
    </source>
</reference>
<reference key="3">
    <citation type="journal article" date="2003" name="Mol. Biol. Cell">
        <title>Rabring7, a novel Rab7 target protein with a RING finger motif.</title>
        <authorList>
            <person name="Mizuno K."/>
            <person name="Kitamura A."/>
            <person name="Sasaki T."/>
        </authorList>
    </citation>
    <scope>INTERACTION WITH RAB7A</scope>
    <scope>SUBCELLULAR LOCATION</scope>
</reference>
<reference key="4">
    <citation type="journal article" date="2007" name="Biochem. Biophys. Res. Commun.">
        <title>Involvement of Rabring7 in EGF receptor degradation as an E3 ligase.</title>
        <authorList>
            <person name="Sakane A."/>
            <person name="Hatakeyama S."/>
            <person name="Sasaki T."/>
        </authorList>
    </citation>
    <scope>FUNCTION</scope>
    <scope>PATHWAY</scope>
    <scope>CATALYTIC ACTIVITY</scope>
    <scope>AUTOUBIQUITINATION</scope>
    <scope>MUTAGENESIS OF CYS-229</scope>
</reference>
<reference key="5">
    <citation type="journal article" date="2013" name="J. Cell Sci.">
        <title>The E3 ubiquitin ligases RNF126 and Rabring7 regulate endosomal sorting of the epidermal growth factor receptor.</title>
        <authorList>
            <person name="Smith C.J."/>
            <person name="Berry D.M."/>
            <person name="McGlade C.J."/>
        </authorList>
    </citation>
    <scope>FUNCTION</scope>
    <scope>PATHWAY</scope>
    <scope>CATALYTIC ACTIVITY</scope>
    <scope>INTERACTION WITH EGFR AND FLT3</scope>
    <scope>MUTAGENESIS OF CYS-22; CYS-25 AND CYS-229</scope>
</reference>
<reference key="6">
    <citation type="journal article" date="2020" name="Nat. Commun.">
        <title>RNF115 plays dual roles in innate antiviral responses by catalyzing distinct ubiquitination of MAVS and MITA.</title>
        <authorList>
            <person name="Zhang Z.D."/>
            <person name="Xiong T.C."/>
            <person name="Yao S.Q."/>
            <person name="Wei M.C."/>
            <person name="Chen M."/>
            <person name="Lin D."/>
            <person name="Zhong B."/>
        </authorList>
    </citation>
    <scope>FUNCTION</scope>
    <scope>DISRUPTION PHENOTYPE</scope>
</reference>
<reference key="7">
    <citation type="journal article" date="2022" name="EMBO J.">
        <title>The E3 ubiquitin ligase RNF115 regulates phagosome maturation and host response to bacterial infection.</title>
        <authorList>
            <person name="Bilkei-Gorzo O."/>
            <person name="Heunis T."/>
            <person name="Marin-Rubio J.L."/>
            <person name="Cianfanelli F.R."/>
            <person name="Raymond B.B.A."/>
            <person name="Inns J."/>
            <person name="Fabrikova D."/>
            <person name="Peltier J."/>
            <person name="Oakley F."/>
            <person name="Schmid R."/>
            <person name="Haertlova A."/>
            <person name="Trost M."/>
        </authorList>
    </citation>
    <scope>FUNCTION</scope>
    <scope>DISRUPTION PHENOTYPE</scope>
    <scope>SUBCELLULAR LOCATION</scope>
</reference>
<proteinExistence type="evidence at protein level"/>
<sequence length="305" mass="33859">MAEASAAGADAGSAVAAHRFFCHFCKGEVNPKLPEYICPRCDSGFIEEVTDDSSFLGGGGSRTDNSTATHFAELWDHLDHTMFLQDFRPFLSSNPLDQDNRANERGHQTHTDFWGPSRPPRLPMTRRYRSRGSTRPDRSPAIEGIIQQIFAGFFANSAIPGSPHPFSWSGMLHSNPGDYAWGQTGLDAIVTQLLGQLENTGPPPADKEKITSLPTVTVTQEQVNTGLECPVCKEDYTVEEKVRQLPCNHFFHSSCIVPWLELHDTCPVCRKSLNGEDSTRQTQSSEASASNRFSNDSQLHDRWTF</sequence>
<comment type="function">
    <text evidence="1 7 8">E3 ubiquitin-protein ligase that catalyzes the 'Lys-48'- and/or 'Lys-63'-linked polyubiquitination of various substrates and thereby plays a role in a number of signaling pathways including autophagy, innate immunity, cell proliferation and cell death (PubMed:36281581). Plays a role in the endosomal trafficking and degradation of membrane receptors including EGFR, FLT3, MET and CXCR4 through their polyubiquitination. Participates together with BST2 in antiviral immunity by facilitating the internalization of HIV-1 virions into intracellular vesicles leading to their lysosomal degradation. Also possesses an antiviral activity independently of BST2 by promoting retroviral GAG proteins ubiquitination, redistribution to endo-lysosomal compartments and, ultimately, lysosomal degradation. Catalyzes distinct types of ubiquitination on MAVS and STING1 at different phases of viral infection to promote innate antiviral response. Mediates the 'Lys-48'-linked ubiquitination of MAVS leading to its proteasomal degradation and ubiquitinates STING1 via 'Lys-63'-linked polyubiquitination, critical for its oligomerization and the subsequent recruitment of TBK1 (PubMed:33139700). Plays a positive role in the autophagosome-lysosome fusion by interacting with STX17 and enhancing its stability without affecting 'Lys-48'- or 'Lys-63'-linked polyubiquitination levels, which in turn promotes autophagosome maturation. Negatively regulates TLR-induced expression of proinflammatory cytokines by catalyzing 'Lys-11'-linked ubiquitination of RAB1A and RAB13 to inhibit post-ER trafficking of TLRs to the Golgi by RAB1A and subsequently from the Golgi apparatus to the cell surface by RAB13.</text>
</comment>
<comment type="catalytic activity">
    <reaction evidence="5 6">
        <text>S-ubiquitinyl-[E2 ubiquitin-conjugating enzyme]-L-cysteine + [acceptor protein]-L-lysine = [E2 ubiquitin-conjugating enzyme]-L-cysteine + N(6)-ubiquitinyl-[acceptor protein]-L-lysine.</text>
        <dbReference type="EC" id="2.3.2.27"/>
    </reaction>
</comment>
<comment type="pathway">
    <text evidence="5 6">Protein modification; protein ubiquitination.</text>
</comment>
<comment type="subunit">
    <text evidence="1 4 6">Interacts with RAB7A (PubMed:12972561). Interacts with EGFR and FLT3 (PubMed:23418353). Interacts with BST2. Interacts with STX17. Interacts with YWHAE (By similarity).</text>
</comment>
<comment type="subcellular location">
    <subcellularLocation>
        <location evidence="4">Cytoplasm</location>
    </subcellularLocation>
    <subcellularLocation>
        <location evidence="8">Cytoplasmic vesicle</location>
        <location evidence="8">Phagosome</location>
    </subcellularLocation>
    <subcellularLocation>
        <location evidence="1">Nucleus</location>
    </subcellularLocation>
    <subcellularLocation>
        <location evidence="1">Endoplasmic reticulum</location>
    </subcellularLocation>
    <subcellularLocation>
        <location evidence="1">Golgi apparatus</location>
    </subcellularLocation>
    <text evidence="4">The GTP-bound form of RAB7A recruits RNF115 from the cytosol onto late endosomes/lysosomes.</text>
</comment>
<comment type="PTM">
    <text evidence="1">Phosphorylated by AKT1, allowing association with the 14-3-3 chaperones that facilitates associating with TLRs.</text>
</comment>
<comment type="PTM">
    <text evidence="1">Deubiquitinated by USP9X; antogonizing its autoubiquitination and subsequent proteasomal degradation.</text>
</comment>
<comment type="PTM">
    <text evidence="5">RING-type zinc finger-dependent and E2-dependent autoubiquitination.</text>
</comment>
<comment type="disruption phenotype">
    <text evidence="7 8">Deletion mutant mice exhibit resistance to RNA virus infection such as ECMV and susceptibility to DNA virus infection such as herpes simplex virus HHV-1 (PubMed:33139700). They also display a significantly reduced infection/inflammation-dependent tissue damage after pathogenic bacteria S.aureus infection (PubMed:36281581).</text>
</comment>
<gene>
    <name evidence="11" type="primary">Rnf115</name>
    <name evidence="11" type="synonym">Zfp364</name>
    <name evidence="1" type="synonym">Znf364</name>
</gene>
<accession>Q9D0C1</accession>
<accession>Q8R5A1</accession>
<accession>Q9D885</accession>
<organism>
    <name type="scientific">Mus musculus</name>
    <name type="common">Mouse</name>
    <dbReference type="NCBI Taxonomy" id="10090"/>
    <lineage>
        <taxon>Eukaryota</taxon>
        <taxon>Metazoa</taxon>
        <taxon>Chordata</taxon>
        <taxon>Craniata</taxon>
        <taxon>Vertebrata</taxon>
        <taxon>Euteleostomi</taxon>
        <taxon>Mammalia</taxon>
        <taxon>Eutheria</taxon>
        <taxon>Euarchontoglires</taxon>
        <taxon>Glires</taxon>
        <taxon>Rodentia</taxon>
        <taxon>Myomorpha</taxon>
        <taxon>Muroidea</taxon>
        <taxon>Muridae</taxon>
        <taxon>Murinae</taxon>
        <taxon>Mus</taxon>
        <taxon>Mus</taxon>
    </lineage>
</organism>
<dbReference type="EC" id="2.3.2.27" evidence="5 6"/>
<dbReference type="EMBL" id="AK008329">
    <property type="protein sequence ID" value="BAB25607.1"/>
    <property type="molecule type" value="mRNA"/>
</dbReference>
<dbReference type="EMBL" id="AK011584">
    <property type="protein sequence ID" value="BAB27716.1"/>
    <property type="molecule type" value="mRNA"/>
</dbReference>
<dbReference type="EMBL" id="BC023113">
    <property type="protein sequence ID" value="AAH23113.1"/>
    <property type="molecule type" value="mRNA"/>
</dbReference>
<dbReference type="CCDS" id="CCDS17647.1"/>
<dbReference type="RefSeq" id="NP_080682.3">
    <property type="nucleotide sequence ID" value="NM_026406.3"/>
</dbReference>
<dbReference type="SMR" id="Q9D0C1"/>
<dbReference type="BioGRID" id="212475">
    <property type="interactions" value="9"/>
</dbReference>
<dbReference type="FunCoup" id="Q9D0C1">
    <property type="interactions" value="2666"/>
</dbReference>
<dbReference type="IntAct" id="Q9D0C1">
    <property type="interactions" value="2"/>
</dbReference>
<dbReference type="MINT" id="Q9D0C1"/>
<dbReference type="STRING" id="10090.ENSMUSP00000029740"/>
<dbReference type="iPTMnet" id="Q9D0C1"/>
<dbReference type="PhosphoSitePlus" id="Q9D0C1"/>
<dbReference type="PaxDb" id="10090-ENSMUSP00000029740"/>
<dbReference type="ProteomicsDB" id="300526"/>
<dbReference type="Pumba" id="Q9D0C1"/>
<dbReference type="Antibodypedia" id="74554">
    <property type="antibodies" value="102 antibodies from 23 providers"/>
</dbReference>
<dbReference type="Ensembl" id="ENSMUST00000029740.14">
    <property type="protein sequence ID" value="ENSMUSP00000029740.10"/>
    <property type="gene ID" value="ENSMUSG00000028098.14"/>
</dbReference>
<dbReference type="GeneID" id="67845"/>
<dbReference type="KEGG" id="mmu:67845"/>
<dbReference type="UCSC" id="uc008qoe.2">
    <property type="organism name" value="mouse"/>
</dbReference>
<dbReference type="AGR" id="MGI:1915095"/>
<dbReference type="CTD" id="27246"/>
<dbReference type="MGI" id="MGI:1915095">
    <property type="gene designation" value="Rnf115"/>
</dbReference>
<dbReference type="VEuPathDB" id="HostDB:ENSMUSG00000028098"/>
<dbReference type="eggNOG" id="KOG0800">
    <property type="taxonomic scope" value="Eukaryota"/>
</dbReference>
<dbReference type="GeneTree" id="ENSGT00940000157203"/>
<dbReference type="HOGENOM" id="CLU_034892_0_2_1"/>
<dbReference type="InParanoid" id="Q9D0C1"/>
<dbReference type="OMA" id="MVPDPHC"/>
<dbReference type="OrthoDB" id="8062037at2759"/>
<dbReference type="PhylomeDB" id="Q9D0C1"/>
<dbReference type="TreeFam" id="TF317985"/>
<dbReference type="Reactome" id="R-MMU-983168">
    <property type="pathway name" value="Antigen processing: Ubiquitination &amp; Proteasome degradation"/>
</dbReference>
<dbReference type="UniPathway" id="UPA00143"/>
<dbReference type="BioGRID-ORCS" id="67845">
    <property type="hits" value="5 hits in 79 CRISPR screens"/>
</dbReference>
<dbReference type="ChiTaRS" id="Rnf115">
    <property type="organism name" value="mouse"/>
</dbReference>
<dbReference type="PRO" id="PR:Q9D0C1"/>
<dbReference type="Proteomes" id="UP000000589">
    <property type="component" value="Chromosome 3"/>
</dbReference>
<dbReference type="RNAct" id="Q9D0C1">
    <property type="molecule type" value="protein"/>
</dbReference>
<dbReference type="Bgee" id="ENSMUSG00000028098">
    <property type="expression patterns" value="Expressed in soleus muscle and 258 other cell types or tissues"/>
</dbReference>
<dbReference type="ExpressionAtlas" id="Q9D0C1">
    <property type="expression patterns" value="baseline and differential"/>
</dbReference>
<dbReference type="GO" id="GO:0005829">
    <property type="term" value="C:cytosol"/>
    <property type="evidence" value="ECO:0000314"/>
    <property type="project" value="UniProtKB"/>
</dbReference>
<dbReference type="GO" id="GO:0005783">
    <property type="term" value="C:endoplasmic reticulum"/>
    <property type="evidence" value="ECO:0007669"/>
    <property type="project" value="UniProtKB-SubCell"/>
</dbReference>
<dbReference type="GO" id="GO:0005794">
    <property type="term" value="C:Golgi apparatus"/>
    <property type="evidence" value="ECO:0007669"/>
    <property type="project" value="UniProtKB-SubCell"/>
</dbReference>
<dbReference type="GO" id="GO:0005634">
    <property type="term" value="C:nucleus"/>
    <property type="evidence" value="ECO:0007669"/>
    <property type="project" value="UniProtKB-SubCell"/>
</dbReference>
<dbReference type="GO" id="GO:0045335">
    <property type="term" value="C:phagocytic vesicle"/>
    <property type="evidence" value="ECO:0007669"/>
    <property type="project" value="UniProtKB-SubCell"/>
</dbReference>
<dbReference type="GO" id="GO:0061630">
    <property type="term" value="F:ubiquitin protein ligase activity"/>
    <property type="evidence" value="ECO:0000314"/>
    <property type="project" value="UniProtKB"/>
</dbReference>
<dbReference type="GO" id="GO:0008270">
    <property type="term" value="F:zinc ion binding"/>
    <property type="evidence" value="ECO:0007669"/>
    <property type="project" value="UniProtKB-KW"/>
</dbReference>
<dbReference type="GO" id="GO:0042059">
    <property type="term" value="P:negative regulation of epidermal growth factor receptor signaling pathway"/>
    <property type="evidence" value="ECO:0000250"/>
    <property type="project" value="UniProtKB"/>
</dbReference>
<dbReference type="GO" id="GO:0034122">
    <property type="term" value="P:negative regulation of toll-like receptor signaling pathway"/>
    <property type="evidence" value="ECO:0007669"/>
    <property type="project" value="Ensembl"/>
</dbReference>
<dbReference type="GO" id="GO:0051865">
    <property type="term" value="P:protein autoubiquitination"/>
    <property type="evidence" value="ECO:0000250"/>
    <property type="project" value="UniProtKB"/>
</dbReference>
<dbReference type="GO" id="GO:0070979">
    <property type="term" value="P:protein K11-linked ubiquitination"/>
    <property type="evidence" value="ECO:0007669"/>
    <property type="project" value="Ensembl"/>
</dbReference>
<dbReference type="GO" id="GO:0070936">
    <property type="term" value="P:protein K48-linked ubiquitination"/>
    <property type="evidence" value="ECO:0000314"/>
    <property type="project" value="UniProtKB"/>
</dbReference>
<dbReference type="GO" id="GO:0070534">
    <property type="term" value="P:protein K63-linked ubiquitination"/>
    <property type="evidence" value="ECO:0000314"/>
    <property type="project" value="UniProtKB"/>
</dbReference>
<dbReference type="GO" id="GO:0043162">
    <property type="term" value="P:ubiquitin-dependent protein catabolic process via the multivesicular body sorting pathway"/>
    <property type="evidence" value="ECO:0000250"/>
    <property type="project" value="UniProtKB"/>
</dbReference>
<dbReference type="CDD" id="cd16800">
    <property type="entry name" value="RING-H2_RNF115"/>
    <property type="match status" value="1"/>
</dbReference>
<dbReference type="FunFam" id="3.30.40.10:FF:000069">
    <property type="entry name" value="E3 ubiquitin-protein ligase RNF115"/>
    <property type="match status" value="1"/>
</dbReference>
<dbReference type="Gene3D" id="3.30.40.10">
    <property type="entry name" value="Zinc/RING finger domain, C3HC4 (zinc finger)"/>
    <property type="match status" value="1"/>
</dbReference>
<dbReference type="InterPro" id="IPR051834">
    <property type="entry name" value="RING_finger_E3_ligase"/>
</dbReference>
<dbReference type="InterPro" id="IPR001841">
    <property type="entry name" value="Znf_RING"/>
</dbReference>
<dbReference type="InterPro" id="IPR013083">
    <property type="entry name" value="Znf_RING/FYVE/PHD"/>
</dbReference>
<dbReference type="PANTHER" id="PTHR45931:SF3">
    <property type="entry name" value="RING ZINC FINGER-CONTAINING PROTEIN"/>
    <property type="match status" value="1"/>
</dbReference>
<dbReference type="PANTHER" id="PTHR45931">
    <property type="entry name" value="SI:CH211-59O9.10"/>
    <property type="match status" value="1"/>
</dbReference>
<dbReference type="Pfam" id="PF13639">
    <property type="entry name" value="zf-RING_2"/>
    <property type="match status" value="1"/>
</dbReference>
<dbReference type="SMART" id="SM00184">
    <property type="entry name" value="RING"/>
    <property type="match status" value="1"/>
</dbReference>
<dbReference type="SUPFAM" id="SSF57850">
    <property type="entry name" value="RING/U-box"/>
    <property type="match status" value="1"/>
</dbReference>
<dbReference type="PROSITE" id="PS50089">
    <property type="entry name" value="ZF_RING_2"/>
    <property type="match status" value="1"/>
</dbReference>
<feature type="initiator methionine" description="Removed" evidence="1">
    <location>
        <position position="1"/>
    </location>
</feature>
<feature type="chain" id="PRO_0000056315" description="E3 ubiquitin-protein ligase RNF115">
    <location>
        <begin position="2"/>
        <end position="305"/>
    </location>
</feature>
<feature type="zinc finger region" description="RING-type" evidence="2">
    <location>
        <begin position="229"/>
        <end position="270"/>
    </location>
</feature>
<feature type="region of interest" description="Disordered" evidence="3">
    <location>
        <begin position="100"/>
        <end position="139"/>
    </location>
</feature>
<feature type="region of interest" description="Disordered" evidence="3">
    <location>
        <begin position="274"/>
        <end position="305"/>
    </location>
</feature>
<feature type="compositionally biased region" description="Basic and acidic residues" evidence="3">
    <location>
        <begin position="100"/>
        <end position="110"/>
    </location>
</feature>
<feature type="compositionally biased region" description="Polar residues" evidence="3">
    <location>
        <begin position="280"/>
        <end position="297"/>
    </location>
</feature>
<feature type="modified residue" description="N-acetylalanine" evidence="1">
    <location>
        <position position="2"/>
    </location>
</feature>
<feature type="modified residue" description="Phosphoserine" evidence="1">
    <location>
        <position position="133"/>
    </location>
</feature>
<feature type="mutagenesis site" description="Loss of interaction with EGFR and FLT3. No effect on E3 ubiquitin protein ligase activity; when associated with A-25." evidence="6">
    <original>C</original>
    <variation>A</variation>
    <location>
        <position position="22"/>
    </location>
</feature>
<feature type="mutagenesis site" description="Loss of interaction with EGFR and FLT3. No effect on E3 ubiquitin protein ligase activity; when associated with A-22." evidence="6">
    <original>C</original>
    <variation>A</variation>
    <location>
        <position position="25"/>
    </location>
</feature>
<feature type="mutagenesis site" description="Loss of E3 ubiquitin protein ligase activity." evidence="5 6">
    <original>C</original>
    <variation>S</variation>
    <location>
        <position position="229"/>
    </location>
</feature>
<feature type="sequence conflict" description="In Ref. 1; BAB25607." evidence="10" ref="1">
    <original>R</original>
    <variation>G</variation>
    <location>
        <position position="40"/>
    </location>
</feature>
<feature type="sequence conflict" description="In Ref. 2; AAH23113." evidence="10" ref="2">
    <original>E</original>
    <variation>G</variation>
    <location>
        <position position="240"/>
    </location>
</feature>
<evidence type="ECO:0000250" key="1">
    <source>
        <dbReference type="UniProtKB" id="Q9Y4L5"/>
    </source>
</evidence>
<evidence type="ECO:0000255" key="2">
    <source>
        <dbReference type="PROSITE-ProRule" id="PRU00175"/>
    </source>
</evidence>
<evidence type="ECO:0000256" key="3">
    <source>
        <dbReference type="SAM" id="MobiDB-lite"/>
    </source>
</evidence>
<evidence type="ECO:0000269" key="4">
    <source>
    </source>
</evidence>
<evidence type="ECO:0000269" key="5">
    <source>
    </source>
</evidence>
<evidence type="ECO:0000269" key="6">
    <source>
    </source>
</evidence>
<evidence type="ECO:0000269" key="7">
    <source>
    </source>
</evidence>
<evidence type="ECO:0000269" key="8">
    <source>
    </source>
</evidence>
<evidence type="ECO:0000303" key="9">
    <source>
    </source>
</evidence>
<evidence type="ECO:0000305" key="10"/>
<evidence type="ECO:0000312" key="11">
    <source>
        <dbReference type="MGI" id="MGI:1915095"/>
    </source>
</evidence>
<keyword id="KW-0007">Acetylation</keyword>
<keyword id="KW-0963">Cytoplasm</keyword>
<keyword id="KW-0968">Cytoplasmic vesicle</keyword>
<keyword id="KW-0256">Endoplasmic reticulum</keyword>
<keyword id="KW-0333">Golgi apparatus</keyword>
<keyword id="KW-0479">Metal-binding</keyword>
<keyword id="KW-0539">Nucleus</keyword>
<keyword id="KW-0597">Phosphoprotein</keyword>
<keyword id="KW-1185">Reference proteome</keyword>
<keyword id="KW-0808">Transferase</keyword>
<keyword id="KW-0832">Ubl conjugation</keyword>
<keyword id="KW-0833">Ubl conjugation pathway</keyword>
<keyword id="KW-0862">Zinc</keyword>
<keyword id="KW-0863">Zinc-finger</keyword>